<feature type="chain" id="PRO_0000240977" description="Cysteine--tRNA ligase">
    <location>
        <begin position="1"/>
        <end position="476"/>
    </location>
</feature>
<feature type="short sequence motif" description="'HIGH' region">
    <location>
        <begin position="33"/>
        <end position="43"/>
    </location>
</feature>
<feature type="short sequence motif" description="'KMSKS' region">
    <location>
        <begin position="269"/>
        <end position="273"/>
    </location>
</feature>
<feature type="binding site" evidence="1">
    <location>
        <position position="31"/>
    </location>
    <ligand>
        <name>Zn(2+)</name>
        <dbReference type="ChEBI" id="CHEBI:29105"/>
    </ligand>
</feature>
<feature type="binding site" evidence="1">
    <location>
        <position position="211"/>
    </location>
    <ligand>
        <name>Zn(2+)</name>
        <dbReference type="ChEBI" id="CHEBI:29105"/>
    </ligand>
</feature>
<feature type="binding site" evidence="1">
    <location>
        <position position="236"/>
    </location>
    <ligand>
        <name>Zn(2+)</name>
        <dbReference type="ChEBI" id="CHEBI:29105"/>
    </ligand>
</feature>
<feature type="binding site" evidence="1">
    <location>
        <position position="240"/>
    </location>
    <ligand>
        <name>Zn(2+)</name>
        <dbReference type="ChEBI" id="CHEBI:29105"/>
    </ligand>
</feature>
<feature type="binding site" evidence="1">
    <location>
        <position position="272"/>
    </location>
    <ligand>
        <name>ATP</name>
        <dbReference type="ChEBI" id="CHEBI:30616"/>
    </ligand>
</feature>
<name>SYC_XANOM</name>
<comment type="catalytic activity">
    <reaction evidence="1">
        <text>tRNA(Cys) + L-cysteine + ATP = L-cysteinyl-tRNA(Cys) + AMP + diphosphate</text>
        <dbReference type="Rhea" id="RHEA:17773"/>
        <dbReference type="Rhea" id="RHEA-COMP:9661"/>
        <dbReference type="Rhea" id="RHEA-COMP:9679"/>
        <dbReference type="ChEBI" id="CHEBI:30616"/>
        <dbReference type="ChEBI" id="CHEBI:33019"/>
        <dbReference type="ChEBI" id="CHEBI:35235"/>
        <dbReference type="ChEBI" id="CHEBI:78442"/>
        <dbReference type="ChEBI" id="CHEBI:78517"/>
        <dbReference type="ChEBI" id="CHEBI:456215"/>
        <dbReference type="EC" id="6.1.1.16"/>
    </reaction>
</comment>
<comment type="cofactor">
    <cofactor evidence="1">
        <name>Zn(2+)</name>
        <dbReference type="ChEBI" id="CHEBI:29105"/>
    </cofactor>
    <text evidence="1">Binds 1 zinc ion per subunit.</text>
</comment>
<comment type="subunit">
    <text evidence="1">Monomer.</text>
</comment>
<comment type="subcellular location">
    <subcellularLocation>
        <location evidence="1">Cytoplasm</location>
    </subcellularLocation>
</comment>
<comment type="similarity">
    <text evidence="1">Belongs to the class-I aminoacyl-tRNA synthetase family.</text>
</comment>
<proteinExistence type="inferred from homology"/>
<evidence type="ECO:0000255" key="1">
    <source>
        <dbReference type="HAMAP-Rule" id="MF_00041"/>
    </source>
</evidence>
<sequence>MPMSLRLHNNLTRRVEPFTPLDPSSPTLYVCGPTVYNYAHIGNARGPVVFDVLAALLRRRYGALRYARNITDVDDKINAAAQAQGVPISTITDRFAAIYRQDMAALGVVPPDIEPEATAHIPQIVAMIEQLIANGHAYAAEGHVLFSVSSFEDYGKLSRRDPDEMLAGARVDVAPYKRDPGDFVLWKPSSDELPGWESPWGRGRPGWHIECSAMAAAHLGPTIDIHAGGVDLQFPHHENEIAQSECAHGGATFARFWLHNGMLNFSGAKMSKSLGNIETVHDLIAKHPPEALRYALLSAHYRQPLDWSDGLIEQATNTLDRLYGTLRDLAALEACGSSGVEVSKTIPVEVESALQDDLNTPLALSVIASIASEARALRNELVHGGEPSARMSELHAVRAKLLGAGLALGLLQQDPAAWFSRGTDADDDARITALVQERSAAKKAKDFARADAIRKQLADEGIVLEDTPQGVRWKRA</sequence>
<gene>
    <name evidence="1" type="primary">cysS</name>
    <name type="ordered locus">XOO2524</name>
</gene>
<keyword id="KW-0030">Aminoacyl-tRNA synthetase</keyword>
<keyword id="KW-0067">ATP-binding</keyword>
<keyword id="KW-0963">Cytoplasm</keyword>
<keyword id="KW-0436">Ligase</keyword>
<keyword id="KW-0479">Metal-binding</keyword>
<keyword id="KW-0547">Nucleotide-binding</keyword>
<keyword id="KW-0648">Protein biosynthesis</keyword>
<keyword id="KW-0862">Zinc</keyword>
<protein>
    <recommendedName>
        <fullName evidence="1">Cysteine--tRNA ligase</fullName>
        <ecNumber evidence="1">6.1.1.16</ecNumber>
    </recommendedName>
    <alternativeName>
        <fullName evidence="1">Cysteinyl-tRNA synthetase</fullName>
        <shortName evidence="1">CysRS</shortName>
    </alternativeName>
</protein>
<accession>Q2P2E8</accession>
<reference key="1">
    <citation type="journal article" date="2005" name="Jpn. Agric. Res. Q.">
        <title>Genome sequence of Xanthomonas oryzae pv. oryzae suggests contribution of large numbers of effector genes and insertion sequences to its race diversity.</title>
        <authorList>
            <person name="Ochiai H."/>
            <person name="Inoue Y."/>
            <person name="Takeya M."/>
            <person name="Sasaki A."/>
            <person name="Kaku H."/>
        </authorList>
    </citation>
    <scope>NUCLEOTIDE SEQUENCE [LARGE SCALE GENOMIC DNA]</scope>
    <source>
        <strain>MAFF 311018</strain>
    </source>
</reference>
<dbReference type="EC" id="6.1.1.16" evidence="1"/>
<dbReference type="EMBL" id="AP008229">
    <property type="protein sequence ID" value="BAE69279.1"/>
    <property type="molecule type" value="Genomic_DNA"/>
</dbReference>
<dbReference type="SMR" id="Q2P2E8"/>
<dbReference type="KEGG" id="xom:XOO2524"/>
<dbReference type="HOGENOM" id="CLU_013528_0_1_6"/>
<dbReference type="GO" id="GO:0005829">
    <property type="term" value="C:cytosol"/>
    <property type="evidence" value="ECO:0007669"/>
    <property type="project" value="TreeGrafter"/>
</dbReference>
<dbReference type="GO" id="GO:0005524">
    <property type="term" value="F:ATP binding"/>
    <property type="evidence" value="ECO:0007669"/>
    <property type="project" value="UniProtKB-UniRule"/>
</dbReference>
<dbReference type="GO" id="GO:0004817">
    <property type="term" value="F:cysteine-tRNA ligase activity"/>
    <property type="evidence" value="ECO:0007669"/>
    <property type="project" value="UniProtKB-UniRule"/>
</dbReference>
<dbReference type="GO" id="GO:0008270">
    <property type="term" value="F:zinc ion binding"/>
    <property type="evidence" value="ECO:0007669"/>
    <property type="project" value="UniProtKB-UniRule"/>
</dbReference>
<dbReference type="GO" id="GO:0006423">
    <property type="term" value="P:cysteinyl-tRNA aminoacylation"/>
    <property type="evidence" value="ECO:0007669"/>
    <property type="project" value="UniProtKB-UniRule"/>
</dbReference>
<dbReference type="CDD" id="cd00672">
    <property type="entry name" value="CysRS_core"/>
    <property type="match status" value="1"/>
</dbReference>
<dbReference type="FunFam" id="3.40.50.620:FF:000068">
    <property type="entry name" value="Cysteine--tRNA ligase"/>
    <property type="match status" value="1"/>
</dbReference>
<dbReference type="Gene3D" id="1.20.120.1910">
    <property type="entry name" value="Cysteine-tRNA ligase, C-terminal anti-codon recognition domain"/>
    <property type="match status" value="1"/>
</dbReference>
<dbReference type="Gene3D" id="3.40.50.620">
    <property type="entry name" value="HUPs"/>
    <property type="match status" value="1"/>
</dbReference>
<dbReference type="HAMAP" id="MF_00041">
    <property type="entry name" value="Cys_tRNA_synth"/>
    <property type="match status" value="1"/>
</dbReference>
<dbReference type="InterPro" id="IPR015803">
    <property type="entry name" value="Cys-tRNA-ligase"/>
</dbReference>
<dbReference type="InterPro" id="IPR015273">
    <property type="entry name" value="Cys-tRNA-synt_Ia_DALR"/>
</dbReference>
<dbReference type="InterPro" id="IPR024909">
    <property type="entry name" value="Cys-tRNA/MSH_ligase"/>
</dbReference>
<dbReference type="InterPro" id="IPR056411">
    <property type="entry name" value="CysS_C"/>
</dbReference>
<dbReference type="InterPro" id="IPR014729">
    <property type="entry name" value="Rossmann-like_a/b/a_fold"/>
</dbReference>
<dbReference type="InterPro" id="IPR032678">
    <property type="entry name" value="tRNA-synt_1_cat_dom"/>
</dbReference>
<dbReference type="InterPro" id="IPR009080">
    <property type="entry name" value="tRNAsynth_Ia_anticodon-bd"/>
</dbReference>
<dbReference type="NCBIfam" id="TIGR00435">
    <property type="entry name" value="cysS"/>
    <property type="match status" value="1"/>
</dbReference>
<dbReference type="PANTHER" id="PTHR10890:SF3">
    <property type="entry name" value="CYSTEINE--TRNA LIGASE, CYTOPLASMIC"/>
    <property type="match status" value="1"/>
</dbReference>
<dbReference type="PANTHER" id="PTHR10890">
    <property type="entry name" value="CYSTEINYL-TRNA SYNTHETASE"/>
    <property type="match status" value="1"/>
</dbReference>
<dbReference type="Pfam" id="PF23493">
    <property type="entry name" value="CysS_C"/>
    <property type="match status" value="1"/>
</dbReference>
<dbReference type="Pfam" id="PF09190">
    <property type="entry name" value="DALR_2"/>
    <property type="match status" value="1"/>
</dbReference>
<dbReference type="Pfam" id="PF01406">
    <property type="entry name" value="tRNA-synt_1e"/>
    <property type="match status" value="1"/>
</dbReference>
<dbReference type="PRINTS" id="PR00983">
    <property type="entry name" value="TRNASYNTHCYS"/>
</dbReference>
<dbReference type="SMART" id="SM00840">
    <property type="entry name" value="DALR_2"/>
    <property type="match status" value="1"/>
</dbReference>
<dbReference type="SUPFAM" id="SSF47323">
    <property type="entry name" value="Anticodon-binding domain of a subclass of class I aminoacyl-tRNA synthetases"/>
    <property type="match status" value="1"/>
</dbReference>
<dbReference type="SUPFAM" id="SSF52374">
    <property type="entry name" value="Nucleotidylyl transferase"/>
    <property type="match status" value="1"/>
</dbReference>
<organism>
    <name type="scientific">Xanthomonas oryzae pv. oryzae (strain MAFF 311018)</name>
    <dbReference type="NCBI Taxonomy" id="342109"/>
    <lineage>
        <taxon>Bacteria</taxon>
        <taxon>Pseudomonadati</taxon>
        <taxon>Pseudomonadota</taxon>
        <taxon>Gammaproteobacteria</taxon>
        <taxon>Lysobacterales</taxon>
        <taxon>Lysobacteraceae</taxon>
        <taxon>Xanthomonas</taxon>
    </lineage>
</organism>